<protein>
    <recommendedName>
        <fullName evidence="9">Eukaryotic translation initiation factor 2-alpha kinase 1</fullName>
        <ecNumber evidence="4">2.7.11.1</ecNumber>
    </recommendedName>
    <alternativeName>
        <fullName evidence="3">Heme-regulated eukaryotic initiation factor eIF-2-alpha kinase</fullName>
    </alternativeName>
    <alternativeName>
        <fullName evidence="3">Hemin-sensitive initiation factor 2-alpha kinase</fullName>
    </alternativeName>
</protein>
<dbReference type="EC" id="2.7.11.1" evidence="4"/>
<dbReference type="EMBL" id="AB168513">
    <property type="protein sequence ID" value="BAE00632.1"/>
    <property type="molecule type" value="mRNA"/>
</dbReference>
<dbReference type="RefSeq" id="NP_001270717.1">
    <property type="nucleotide sequence ID" value="NM_001283788.1"/>
</dbReference>
<dbReference type="SMR" id="Q4R8E0"/>
<dbReference type="STRING" id="9541.ENSMFAP00000044852"/>
<dbReference type="eggNOG" id="KOG1035">
    <property type="taxonomic scope" value="Eukaryota"/>
</dbReference>
<dbReference type="Proteomes" id="UP000233100">
    <property type="component" value="Unplaced"/>
</dbReference>
<dbReference type="GO" id="GO:0005737">
    <property type="term" value="C:cytoplasm"/>
    <property type="evidence" value="ECO:0007669"/>
    <property type="project" value="UniProtKB-SubCell"/>
</dbReference>
<dbReference type="GO" id="GO:0005634">
    <property type="term" value="C:nucleus"/>
    <property type="evidence" value="ECO:0007669"/>
    <property type="project" value="TreeGrafter"/>
</dbReference>
<dbReference type="GO" id="GO:0005524">
    <property type="term" value="F:ATP binding"/>
    <property type="evidence" value="ECO:0007669"/>
    <property type="project" value="UniProtKB-KW"/>
</dbReference>
<dbReference type="GO" id="GO:0004694">
    <property type="term" value="F:eukaryotic translation initiation factor 2alpha kinase activity"/>
    <property type="evidence" value="ECO:0000250"/>
    <property type="project" value="UniProtKB"/>
</dbReference>
<dbReference type="GO" id="GO:0106310">
    <property type="term" value="F:protein serine kinase activity"/>
    <property type="evidence" value="ECO:0007669"/>
    <property type="project" value="RHEA"/>
</dbReference>
<dbReference type="GO" id="GO:0140468">
    <property type="term" value="P:HRI-mediated signaling"/>
    <property type="evidence" value="ECO:0000250"/>
    <property type="project" value="UniProtKB"/>
</dbReference>
<dbReference type="GO" id="GO:0140467">
    <property type="term" value="P:integrated stress response signaling"/>
    <property type="evidence" value="ECO:0000250"/>
    <property type="project" value="UniProtKB"/>
</dbReference>
<dbReference type="GO" id="GO:0017148">
    <property type="term" value="P:negative regulation of translation"/>
    <property type="evidence" value="ECO:0007669"/>
    <property type="project" value="UniProtKB-KW"/>
</dbReference>
<dbReference type="GO" id="GO:1901526">
    <property type="term" value="P:positive regulation of mitophagy"/>
    <property type="evidence" value="ECO:0000250"/>
    <property type="project" value="UniProtKB"/>
</dbReference>
<dbReference type="CDD" id="cd14049">
    <property type="entry name" value="STKc_EIF2AK1_HRI"/>
    <property type="match status" value="1"/>
</dbReference>
<dbReference type="FunFam" id="3.30.200.20:FF:000380">
    <property type="entry name" value="Eukaryotic translation initiation factor 2 alpha kinase 1"/>
    <property type="match status" value="1"/>
</dbReference>
<dbReference type="FunFam" id="1.10.510.10:FF:000375">
    <property type="entry name" value="Putative eukaryotic translation initiation factor 2-alpha kinase 1"/>
    <property type="match status" value="1"/>
</dbReference>
<dbReference type="Gene3D" id="3.30.200.20">
    <property type="entry name" value="Phosphorylase Kinase, domain 1"/>
    <property type="match status" value="1"/>
</dbReference>
<dbReference type="Gene3D" id="1.10.510.10">
    <property type="entry name" value="Transferase(Phosphotransferase) domain 1"/>
    <property type="match status" value="1"/>
</dbReference>
<dbReference type="InterPro" id="IPR050339">
    <property type="entry name" value="CC_SR_Kinase"/>
</dbReference>
<dbReference type="InterPro" id="IPR054521">
    <property type="entry name" value="HRI2_3H"/>
</dbReference>
<dbReference type="InterPro" id="IPR011009">
    <property type="entry name" value="Kinase-like_dom_sf"/>
</dbReference>
<dbReference type="InterPro" id="IPR000719">
    <property type="entry name" value="Prot_kinase_dom"/>
</dbReference>
<dbReference type="InterPro" id="IPR017441">
    <property type="entry name" value="Protein_kinase_ATP_BS"/>
</dbReference>
<dbReference type="InterPro" id="IPR008271">
    <property type="entry name" value="Ser/Thr_kinase_AS"/>
</dbReference>
<dbReference type="PANTHER" id="PTHR11042:SF160">
    <property type="entry name" value="EUKARYOTIC TRANSLATION INITIATION FACTOR 2-ALPHA KINASE 1"/>
    <property type="match status" value="1"/>
</dbReference>
<dbReference type="PANTHER" id="PTHR11042">
    <property type="entry name" value="EUKARYOTIC TRANSLATION INITIATION FACTOR 2-ALPHA KINASE EIF2-ALPHA KINASE -RELATED"/>
    <property type="match status" value="1"/>
</dbReference>
<dbReference type="Pfam" id="PF22949">
    <property type="entry name" value="HRI2_3H"/>
    <property type="match status" value="1"/>
</dbReference>
<dbReference type="Pfam" id="PF00069">
    <property type="entry name" value="Pkinase"/>
    <property type="match status" value="2"/>
</dbReference>
<dbReference type="SMART" id="SM00220">
    <property type="entry name" value="S_TKc"/>
    <property type="match status" value="1"/>
</dbReference>
<dbReference type="SUPFAM" id="SSF56112">
    <property type="entry name" value="Protein kinase-like (PK-like)"/>
    <property type="match status" value="1"/>
</dbReference>
<dbReference type="PROSITE" id="PS00107">
    <property type="entry name" value="PROTEIN_KINASE_ATP"/>
    <property type="match status" value="1"/>
</dbReference>
<dbReference type="PROSITE" id="PS50011">
    <property type="entry name" value="PROTEIN_KINASE_DOM"/>
    <property type="match status" value="1"/>
</dbReference>
<dbReference type="PROSITE" id="PS00108">
    <property type="entry name" value="PROTEIN_KINASE_ST"/>
    <property type="match status" value="1"/>
</dbReference>
<accession>Q4R8E0</accession>
<proteinExistence type="evidence at transcript level"/>
<comment type="function">
    <text evidence="3 4">Metabolic-stress sensing protein kinase that phosphorylates the alpha subunit of eukaryotic translation initiation factor 2 (EIF2S1/eIF-2-alpha) in response to various stress conditions. Key activator of the integrated stress response (ISR) required for adaptation to various stress, such as heme deficiency, oxidative stress, osmotic shock, mitochondrial dysfunction and heat shock. EIF2S1/eIF-2-alpha phosphorylation in response to stress converts EIF2S1/eIF-2-alpha in a global protein synthesis inhibitor, leading to a global attenuation of cap-dependent translation, while concomitantly initiating the preferential translation of ISR-specific mRNAs, such as the transcriptional activator ATF4, and hence allowing ATF4-mediated reprogramming. Acts as a key sensor of heme-deficiency: in normal conditions, binds hemin via a cysteine thiolate and histidine nitrogenous coordination, leading to inhibit the protein kinase activity. This binding occurs with moderate affinity, allowing it to sense the heme concentration within the cell: heme depletion relieves inhibition and stimulates kinase activity, activating the ISR. Thanks to this unique heme-sensing capacity, plays a crucial role to shut off protein synthesis during acute heme-deficient conditions. In red blood cells (RBCs), controls hemoglobin synthesis ensuring a coordinated regulation of the synthesis of its heme and globin moieties. It thereby plays an essential protective role for RBC survival in anemias of iron deficiency. Iron deficiency also triggers activation by full-length DELE1. Also activates the ISR in response to mitochondrial dysfunction: HRI/EIF2AK1 protein kinase activity is activated upon binding to the processed form of DELE1 (S-DELE1), thereby promoting the ATF4-mediated reprogramming (By similarity). Also acts as an activator of mitophagy in response to mitochondrial damage: catalyzes phosphorylation of eIF-2-alpha (EIF2S1) following activation by S-DELE1, thereby promoting mitochondrial localization of EIF2S1, triggering PRKN-independent mitophagy (By similarity).</text>
</comment>
<comment type="catalytic activity">
    <reaction evidence="4">
        <text>L-seryl-[protein] + ATP = O-phospho-L-seryl-[protein] + ADP + H(+)</text>
        <dbReference type="Rhea" id="RHEA:17989"/>
        <dbReference type="Rhea" id="RHEA-COMP:9863"/>
        <dbReference type="Rhea" id="RHEA-COMP:11604"/>
        <dbReference type="ChEBI" id="CHEBI:15378"/>
        <dbReference type="ChEBI" id="CHEBI:29999"/>
        <dbReference type="ChEBI" id="CHEBI:30616"/>
        <dbReference type="ChEBI" id="CHEBI:83421"/>
        <dbReference type="ChEBI" id="CHEBI:456216"/>
        <dbReference type="EC" id="2.7.11.1"/>
    </reaction>
    <physiologicalReaction direction="left-to-right" evidence="4">
        <dbReference type="Rhea" id="RHEA:17990"/>
    </physiologicalReaction>
</comment>
<comment type="catalytic activity">
    <reaction evidence="4">
        <text>L-threonyl-[protein] + ATP = O-phospho-L-threonyl-[protein] + ADP + H(+)</text>
        <dbReference type="Rhea" id="RHEA:46608"/>
        <dbReference type="Rhea" id="RHEA-COMP:11060"/>
        <dbReference type="Rhea" id="RHEA-COMP:11605"/>
        <dbReference type="ChEBI" id="CHEBI:15378"/>
        <dbReference type="ChEBI" id="CHEBI:30013"/>
        <dbReference type="ChEBI" id="CHEBI:30616"/>
        <dbReference type="ChEBI" id="CHEBI:61977"/>
        <dbReference type="ChEBI" id="CHEBI:456216"/>
        <dbReference type="EC" id="2.7.11.1"/>
    </reaction>
    <physiologicalReaction direction="left-to-right" evidence="4">
        <dbReference type="Rhea" id="RHEA:46609"/>
    </physiologicalReaction>
</comment>
<comment type="activity regulation">
    <text evidence="1 3 4">In normal conditions, the protein kinase activity is inhibited; inhibition is relieved by various stress conditions (By similarity). Inhibited by heme: in presence of heme, forms a disulfide-linked inactive homodimer (By similarity). Heme depletion relieves inhibition and stimulates kinase activity by autophosphorylation. Inhibited by the heme metabolites biliverdin and bilirubin. Induced by oxidative stress generated by arsenite treatment. Binding of nitric oxide (NO) to the heme iron in the N-terminal heme-binding domain activates the kinase activity, while binding of carbon monoxide (CO) suppresses kinase activity (By similarity). Protein kinase activity is also activated upon binding to DELE1 in response to various stress, triggering the integrated stress response (ISR): activated by full-length DELE1 in response to iron deficiency, while it is activated by the processed form of DELE1 (S-DELE1) in response to mitochondrial stress (By similarity).</text>
</comment>
<comment type="subunit">
    <text evidence="1 3">Synthesized in an inactive form that binds to the N-terminal domain of CDC37. Has to be associated with a multiprotein complex containing Hsp90, CDC37 and PPP5C for maturation and activation by autophosphorylation. The phosphatase PPP5C modulates this activation (By similarity). Homodimer; homodimerizes in presence of heme, forming a disulfide-linked inactive homodimer (By similarity). Interacts with DELE1; binds both to full-length DELE1 and processed form of DELE1 (S-DELE1) in response to stress, leading to activate its protein kinase activity and trigger the integrated stress response (ISR) (By similarity).</text>
</comment>
<comment type="subcellular location">
    <subcellularLocation>
        <location evidence="4">Cytoplasm</location>
    </subcellularLocation>
</comment>
<comment type="PTM">
    <text evidence="4">Activated by autophosphorylation; phosphorylated predominantly on serine and threonine residues, but also on tyrosine residues. Autophosphorylation at Thr-488 is required for kinase activation. The active autophosphorylated form apparently is largely refractory to cellular heme fluctuations.</text>
</comment>
<comment type="PTM">
    <text evidence="3">Ubiquitinated and degraded by the SIFI complex once the mitochondrial stress has been resolved, thereby providing stress response silencing. Within the SIFI complex, UBR4 initiates ubiquitin chain that are further elongated or branched by KCMF1.</text>
</comment>
<comment type="similarity">
    <text evidence="5">Belongs to the protein kinase superfamily. Ser/Thr protein kinase family. GCN2 subfamily.</text>
</comment>
<gene>
    <name evidence="3" type="primary">EIF2AK1</name>
    <name evidence="8" type="ORF">QtsA-12694</name>
</gene>
<name>E2AK1_MACFA</name>
<evidence type="ECO:0000250" key="1">
    <source>
        <dbReference type="UniProtKB" id="P33279"/>
    </source>
</evidence>
<evidence type="ECO:0000250" key="2">
    <source>
        <dbReference type="UniProtKB" id="Q63185"/>
    </source>
</evidence>
<evidence type="ECO:0000250" key="3">
    <source>
        <dbReference type="UniProtKB" id="Q9BQI3"/>
    </source>
</evidence>
<evidence type="ECO:0000250" key="4">
    <source>
        <dbReference type="UniProtKB" id="Q9Z2R9"/>
    </source>
</evidence>
<evidence type="ECO:0000255" key="5">
    <source>
        <dbReference type="PROSITE-ProRule" id="PRU00159"/>
    </source>
</evidence>
<evidence type="ECO:0000255" key="6">
    <source>
        <dbReference type="PROSITE-ProRule" id="PRU10027"/>
    </source>
</evidence>
<evidence type="ECO:0000256" key="7">
    <source>
        <dbReference type="SAM" id="MobiDB-lite"/>
    </source>
</evidence>
<evidence type="ECO:0000303" key="8">
    <source ref="1"/>
</evidence>
<evidence type="ECO:0000305" key="9"/>
<organism>
    <name type="scientific">Macaca fascicularis</name>
    <name type="common">Crab-eating macaque</name>
    <name type="synonym">Cynomolgus monkey</name>
    <dbReference type="NCBI Taxonomy" id="9541"/>
    <lineage>
        <taxon>Eukaryota</taxon>
        <taxon>Metazoa</taxon>
        <taxon>Chordata</taxon>
        <taxon>Craniata</taxon>
        <taxon>Vertebrata</taxon>
        <taxon>Euteleostomi</taxon>
        <taxon>Mammalia</taxon>
        <taxon>Eutheria</taxon>
        <taxon>Euarchontoglires</taxon>
        <taxon>Primates</taxon>
        <taxon>Haplorrhini</taxon>
        <taxon>Catarrhini</taxon>
        <taxon>Cercopithecidae</taxon>
        <taxon>Cercopithecinae</taxon>
        <taxon>Macaca</taxon>
    </lineage>
</organism>
<sequence>MQGGNSGVRKREEEGGGEGAVAAPPAIDFPAESSDLKYDESDVPAELQVLKEPLQQPTFPFAVANQLLLVSLLEHLSHVHEPNPLRSRQVFKLLCQTFIKMGLLSSFTCSDEFSSLRLHHNRAITHLMRSAKERVRQDPCEDVSHIQKIRSREVAFEAQTSRYLNEFEEVAILGKGGYGRVYKVRNKLDGQYYAIKKILIKGATKTDCMKVLREVKVLAGLQHPNIVGYHTAWIEHVHVIQPRADRAAIELPTLEVLSDQEEDREQYDVKNDESSSSSIVFAEPTPEKGKRFGESDTENQNDKSVKYTTSLVIRDSGELESTLELQENDLAGLSTSSIMEQQLPLRRNSHLDDSFTSTEESSEENVNFLGQTEAQYHLMLHIQMQLCELSLWDWIAERNKRSRECVDESACPYVMANVATKIFQELVEGVFYIHNMGIVHRDLKPRNIFLHGPDQQVKIGDFGLACTDILQKNADWTNRNGKRTPTHTSRVGTCLYASPEQLEGSEYDAKSDMYSLGVILLELFQPFGTEMERAEVLTGLRTGQLPESLSKRCPVQAKYIQHLTRRNSSQRPSAVQLLQSELFQTSGNVNFTLQMKIIEQEKEIAELKKQLNLLSQDKGVRDDGKDGGVPV</sequence>
<keyword id="KW-0067">ATP-binding</keyword>
<keyword id="KW-0963">Cytoplasm</keyword>
<keyword id="KW-1015">Disulfide bond</keyword>
<keyword id="KW-0418">Kinase</keyword>
<keyword id="KW-0547">Nucleotide-binding</keyword>
<keyword id="KW-0597">Phosphoprotein</keyword>
<keyword id="KW-0652">Protein synthesis inhibitor</keyword>
<keyword id="KW-1185">Reference proteome</keyword>
<keyword id="KW-0677">Repeat</keyword>
<keyword id="KW-0723">Serine/threonine-protein kinase</keyword>
<keyword id="KW-0808">Transferase</keyword>
<keyword id="KW-0832">Ubl conjugation</keyword>
<feature type="chain" id="PRO_0000260275" description="Eukaryotic translation initiation factor 2-alpha kinase 1">
    <location>
        <begin position="1"/>
        <end position="631"/>
    </location>
</feature>
<feature type="domain" description="Protein kinase" evidence="5">
    <location>
        <begin position="167"/>
        <end position="583"/>
    </location>
</feature>
<feature type="repeat" description="HRM 1">
    <location>
        <begin position="410"/>
        <end position="415"/>
    </location>
</feature>
<feature type="repeat" description="HRM 2">
    <location>
        <begin position="552"/>
        <end position="557"/>
    </location>
</feature>
<feature type="region of interest" description="Disordered" evidence="7">
    <location>
        <begin position="1"/>
        <end position="34"/>
    </location>
</feature>
<feature type="region of interest" description="Disordered" evidence="7">
    <location>
        <begin position="260"/>
        <end position="301"/>
    </location>
</feature>
<feature type="short sequence motif" description="SIFI-degron" evidence="3">
    <location>
        <begin position="85"/>
        <end position="104"/>
    </location>
</feature>
<feature type="compositionally biased region" description="Basic and acidic residues" evidence="7">
    <location>
        <begin position="285"/>
        <end position="301"/>
    </location>
</feature>
<feature type="active site" description="Proton acceptor" evidence="5 6">
    <location>
        <position position="442"/>
    </location>
</feature>
<feature type="binding site" evidence="5">
    <location>
        <begin position="173"/>
        <end position="181"/>
    </location>
    <ligand>
        <name>ATP</name>
        <dbReference type="ChEBI" id="CHEBI:30616"/>
    </ligand>
</feature>
<feature type="binding site" evidence="5">
    <location>
        <position position="196"/>
    </location>
    <ligand>
        <name>ATP</name>
        <dbReference type="ChEBI" id="CHEBI:30616"/>
    </ligand>
</feature>
<feature type="site" description="Heme-binding" evidence="1">
    <location>
        <position position="80"/>
    </location>
</feature>
<feature type="modified residue" description="Phosphothreonine" evidence="2">
    <location>
        <position position="285"/>
    </location>
</feature>
<feature type="modified residue" description="Phosphothreonine; by autocatalysis" evidence="4">
    <location>
        <position position="486"/>
    </location>
</feature>
<feature type="modified residue" description="Phosphothreonine; by autocatalysis" evidence="4">
    <location>
        <position position="488"/>
    </location>
</feature>
<feature type="modified residue" description="Phosphothreonine" evidence="4">
    <location>
        <position position="493"/>
    </location>
</feature>
<reference key="1">
    <citation type="submission" date="2005-06" db="EMBL/GenBank/DDBJ databases">
        <title>DNA sequences of macaque genes expressed in brain or testis and its evolutionary implications.</title>
        <authorList>
            <consortium name="International consortium for macaque cDNA sequencing and analysis"/>
        </authorList>
    </citation>
    <scope>NUCLEOTIDE SEQUENCE [LARGE SCALE MRNA]</scope>
    <source>
        <tissue>Testis</tissue>
    </source>
</reference>